<evidence type="ECO:0000255" key="1">
    <source>
        <dbReference type="HAMAP-Rule" id="MF_01077"/>
    </source>
</evidence>
<evidence type="ECO:0000305" key="2"/>
<reference key="1">
    <citation type="journal article" date="2009" name="J. Bacteriol.">
        <title>Complete genome sequence of Haemophilus parasuis SH0165.</title>
        <authorList>
            <person name="Yue M."/>
            <person name="Yang F."/>
            <person name="Yang J."/>
            <person name="Bei W."/>
            <person name="Cai X."/>
            <person name="Chen L."/>
            <person name="Dong J."/>
            <person name="Zhou R."/>
            <person name="Jin M."/>
            <person name="Jin Q."/>
            <person name="Chen H."/>
        </authorList>
    </citation>
    <scope>NUCLEOTIDE SEQUENCE [LARGE SCALE GENOMIC DNA]</scope>
    <source>
        <strain>SH0165</strain>
    </source>
</reference>
<dbReference type="EMBL" id="CP001321">
    <property type="protein sequence ID" value="ACL31895.1"/>
    <property type="status" value="ALT_INIT"/>
    <property type="molecule type" value="Genomic_DNA"/>
</dbReference>
<dbReference type="RefSeq" id="WP_005713825.1">
    <property type="nucleotide sequence ID" value="NC_011852.1"/>
</dbReference>
<dbReference type="SMR" id="B8F3J3"/>
<dbReference type="STRING" id="557723.HAPS_0200"/>
<dbReference type="GeneID" id="66618593"/>
<dbReference type="KEGG" id="hap:HAPS_0200"/>
<dbReference type="HOGENOM" id="CLU_070525_1_1_6"/>
<dbReference type="Proteomes" id="UP000006743">
    <property type="component" value="Chromosome"/>
</dbReference>
<dbReference type="GO" id="GO:0005829">
    <property type="term" value="C:cytosol"/>
    <property type="evidence" value="ECO:0007669"/>
    <property type="project" value="TreeGrafter"/>
</dbReference>
<dbReference type="GO" id="GO:0000028">
    <property type="term" value="P:ribosomal small subunit assembly"/>
    <property type="evidence" value="ECO:0007669"/>
    <property type="project" value="TreeGrafter"/>
</dbReference>
<dbReference type="GO" id="GO:0006412">
    <property type="term" value="P:translation"/>
    <property type="evidence" value="ECO:0007669"/>
    <property type="project" value="TreeGrafter"/>
</dbReference>
<dbReference type="CDD" id="cd01734">
    <property type="entry name" value="YlxS_C"/>
    <property type="match status" value="1"/>
</dbReference>
<dbReference type="FunFam" id="3.30.300.70:FF:000001">
    <property type="entry name" value="Ribosome maturation factor RimP"/>
    <property type="match status" value="1"/>
</dbReference>
<dbReference type="Gene3D" id="2.30.30.180">
    <property type="entry name" value="Ribosome maturation factor RimP, C-terminal domain"/>
    <property type="match status" value="1"/>
</dbReference>
<dbReference type="Gene3D" id="3.30.300.70">
    <property type="entry name" value="RimP-like superfamily, N-terminal"/>
    <property type="match status" value="1"/>
</dbReference>
<dbReference type="HAMAP" id="MF_01077">
    <property type="entry name" value="RimP"/>
    <property type="match status" value="1"/>
</dbReference>
<dbReference type="InterPro" id="IPR003728">
    <property type="entry name" value="Ribosome_maturation_RimP"/>
</dbReference>
<dbReference type="InterPro" id="IPR028998">
    <property type="entry name" value="RimP_C"/>
</dbReference>
<dbReference type="InterPro" id="IPR036847">
    <property type="entry name" value="RimP_C_sf"/>
</dbReference>
<dbReference type="InterPro" id="IPR028989">
    <property type="entry name" value="RimP_N"/>
</dbReference>
<dbReference type="InterPro" id="IPR035956">
    <property type="entry name" value="RimP_N_sf"/>
</dbReference>
<dbReference type="NCBIfam" id="NF000927">
    <property type="entry name" value="PRK00092.1-1"/>
    <property type="match status" value="1"/>
</dbReference>
<dbReference type="PANTHER" id="PTHR33867">
    <property type="entry name" value="RIBOSOME MATURATION FACTOR RIMP"/>
    <property type="match status" value="1"/>
</dbReference>
<dbReference type="PANTHER" id="PTHR33867:SF1">
    <property type="entry name" value="RIBOSOME MATURATION FACTOR RIMP"/>
    <property type="match status" value="1"/>
</dbReference>
<dbReference type="Pfam" id="PF17384">
    <property type="entry name" value="DUF150_C"/>
    <property type="match status" value="1"/>
</dbReference>
<dbReference type="Pfam" id="PF02576">
    <property type="entry name" value="RimP_N"/>
    <property type="match status" value="1"/>
</dbReference>
<dbReference type="SUPFAM" id="SSF74942">
    <property type="entry name" value="YhbC-like, C-terminal domain"/>
    <property type="match status" value="1"/>
</dbReference>
<dbReference type="SUPFAM" id="SSF75420">
    <property type="entry name" value="YhbC-like, N-terminal domain"/>
    <property type="match status" value="1"/>
</dbReference>
<sequence>MATLEQKLQELVADPIDAMGFELVGVECQRAGRFLTVRLYIDKEGGVTVDDCSDVSRQVSAIFDVEDPIADKYNLEVSSPGLDRPLFTLAHYQRFVGREIVVHLRIPMLDRRKWQGELVSVEGDLITLKVDGNLQAFAFGNIQKANLIPVFNF</sequence>
<accession>B8F3J3</accession>
<proteinExistence type="inferred from homology"/>
<feature type="chain" id="PRO_0000384677" description="Ribosome maturation factor RimP">
    <location>
        <begin position="1"/>
        <end position="153"/>
    </location>
</feature>
<organism>
    <name type="scientific">Glaesserella parasuis serovar 5 (strain SH0165)</name>
    <name type="common">Haemophilus parasuis</name>
    <dbReference type="NCBI Taxonomy" id="557723"/>
    <lineage>
        <taxon>Bacteria</taxon>
        <taxon>Pseudomonadati</taxon>
        <taxon>Pseudomonadota</taxon>
        <taxon>Gammaproteobacteria</taxon>
        <taxon>Pasteurellales</taxon>
        <taxon>Pasteurellaceae</taxon>
        <taxon>Glaesserella</taxon>
    </lineage>
</organism>
<gene>
    <name evidence="1" type="primary">rimP</name>
    <name type="ordered locus">HAPS_0200</name>
</gene>
<keyword id="KW-0963">Cytoplasm</keyword>
<keyword id="KW-1185">Reference proteome</keyword>
<keyword id="KW-0690">Ribosome biogenesis</keyword>
<comment type="function">
    <text evidence="1">Required for maturation of 30S ribosomal subunits.</text>
</comment>
<comment type="subcellular location">
    <subcellularLocation>
        <location evidence="1">Cytoplasm</location>
    </subcellularLocation>
</comment>
<comment type="similarity">
    <text evidence="1">Belongs to the RimP family.</text>
</comment>
<comment type="sequence caution" evidence="2">
    <conflict type="erroneous initiation">
        <sequence resource="EMBL-CDS" id="ACL31895"/>
    </conflict>
</comment>
<name>RIMP_GLAP5</name>
<protein>
    <recommendedName>
        <fullName evidence="1">Ribosome maturation factor RimP</fullName>
    </recommendedName>
</protein>